<evidence type="ECO:0000255" key="1">
    <source>
        <dbReference type="HAMAP-Rule" id="MF_04016"/>
    </source>
</evidence>
<evidence type="ECO:0000269" key="2">
    <source>
    </source>
</evidence>
<evidence type="ECO:0000269" key="3">
    <source>
    </source>
</evidence>
<evidence type="ECO:0000269" key="4">
    <source>
    </source>
</evidence>
<evidence type="ECO:0000269" key="5">
    <source>
    </source>
</evidence>
<evidence type="ECO:0000269" key="6">
    <source>
    </source>
</evidence>
<evidence type="ECO:0000269" key="7">
    <source>
    </source>
</evidence>
<evidence type="ECO:0007829" key="8">
    <source>
        <dbReference type="PDB" id="1NO7"/>
    </source>
</evidence>
<reference key="1">
    <citation type="journal article" date="1988" name="J. Gen. Virol.">
        <title>The complete DNA sequence of the long unique region in the genome of herpes simplex virus type 1.</title>
        <authorList>
            <person name="McGeoch D.J."/>
            <person name="Dalrymple M.A."/>
            <person name="Davison A.J."/>
            <person name="Dolan A."/>
            <person name="Frame M.C."/>
            <person name="McNab D."/>
            <person name="Perry L.J."/>
            <person name="Scott J.E."/>
            <person name="Taylor P."/>
        </authorList>
    </citation>
    <scope>NUCLEOTIDE SEQUENCE [GENOMIC DNA]</scope>
</reference>
<reference key="2">
    <citation type="journal article" date="1986" name="J. Gen. Virol.">
        <title>DNA sequence of the major capsid protein gene of herpes simplex virus type 1.</title>
        <authorList>
            <person name="Davison B.A.J."/>
            <person name="Scott J.E."/>
        </authorList>
    </citation>
    <scope>NUCLEOTIDE SEQUENCE [GENOMIC DNA]</scope>
</reference>
<reference key="3">
    <citation type="journal article" date="1992" name="J. Gen. Virol.">
        <title>Identification of genes encoding two capsid proteins (VP24 and VP26) of herpes simplex virus type 1.</title>
        <authorList>
            <person name="Davison M.D."/>
            <person name="Rixon F.J."/>
            <person name="Davison A.J."/>
        </authorList>
    </citation>
    <scope>PROTEIN SEQUENCE OF 202-211 AND 607-616</scope>
</reference>
<reference key="4">
    <citation type="journal article" date="1993" name="J. Mol. Biol.">
        <title>Structure of the herpes simplex virus capsid. Molecular composition of the pentons and the triplexes.</title>
        <authorList>
            <person name="Newcomb W.W."/>
            <person name="Trus B.L."/>
            <person name="Booy F.P."/>
            <person name="Steven A.C."/>
            <person name="Wall J.S."/>
            <person name="Brown J.C."/>
        </authorList>
    </citation>
    <scope>FUNCTION</scope>
</reference>
<reference key="5">
    <citation type="journal article" date="1994" name="J. Gen. Virol.">
        <title>Localization of the herpes simplex virus type 1 major capsid protein VP5 to the cell nucleus requires the abundant scaffolding protein VP22a.</title>
        <authorList>
            <person name="Nicholson P."/>
            <person name="Addison C."/>
            <person name="Cross A.M."/>
            <person name="Kennard J."/>
            <person name="Preston V.G."/>
            <person name="Rixon F.J."/>
        </authorList>
    </citation>
    <scope>SUBCELLULAR LOCATION</scope>
</reference>
<reference key="6">
    <citation type="journal article" date="1996" name="J. Virol.">
        <title>Identification of a minimal hydrophobic domain in the herpes simplex virus type 1 scaffolding protein which is required for interaction with the major capsid protein.</title>
        <authorList>
            <person name="Hong Z."/>
            <person name="Beaudet-Miller M."/>
            <person name="Durkin J."/>
            <person name="Zhang R."/>
            <person name="Kwong A.D."/>
        </authorList>
    </citation>
    <scope>INTERACTION WITH SCAFFOLD PROTEIN</scope>
</reference>
<reference key="7">
    <citation type="journal article" date="1996" name="J. Gen. Virol.">
        <title>Multiple interactions control the intracellular localization of the herpes simplex virus type 1 capsid proteins.</title>
        <authorList>
            <person name="Rixon F.J."/>
            <person name="Addison C."/>
            <person name="McGregor A."/>
            <person name="Macnab S.J."/>
            <person name="Nicholson P."/>
            <person name="Preston V.G."/>
            <person name="Tatman J.D."/>
        </authorList>
    </citation>
    <scope>INTERACTION WITH TRX1/VP19C AND TRX2/VP23</scope>
</reference>
<reference key="8">
    <citation type="journal article" date="2001" name="J. Virol.">
        <title>Role of the UL25 gene product in packaging DNA into the herpes simplex virus capsid: location of UL25 product in the capsid and demonstration that it binds DNA.</title>
        <authorList>
            <person name="Ogasawara M."/>
            <person name="Suzutani T."/>
            <person name="Yoshida I."/>
            <person name="Azuma M."/>
        </authorList>
    </citation>
    <scope>INTERACTION WITH CVC2/UL25</scope>
</reference>
<reference key="9">
    <citation type="journal article" date="2003" name="J. Virol.">
        <title>Residues of VP26 of herpes simplex virus type 1 that are required for its interaction with capsids.</title>
        <authorList>
            <person name="Desai P."/>
            <person name="Akpa J.C."/>
            <person name="Person S."/>
        </authorList>
    </citation>
    <scope>INTERACTION WITH SCP/VP26</scope>
    <source>
        <strain>KOS</strain>
    </source>
</reference>
<reference key="10">
    <citation type="journal article" date="2003" name="EMBO J.">
        <title>Structure of the herpesvirus major capsid protein.</title>
        <authorList>
            <person name="Bowman B.R."/>
            <person name="Baker M.L."/>
            <person name="Rixon F.J."/>
            <person name="Chiu W."/>
            <person name="Quiocho F.A."/>
        </authorList>
    </citation>
    <scope>X-RAY CRYSTALLOGRAPHY (2.9 ANGSTROMS) OF 451-1054</scope>
</reference>
<protein>
    <recommendedName>
        <fullName evidence="1">Major capsid protein</fullName>
        <shortName evidence="1">MCP</shortName>
    </recommendedName>
</protein>
<name>MCP_HHV11</name>
<accession>P06491</accession>
<sequence length="1374" mass="149084">MAAPNRDPPGYRYAAAMVPTGSLLSTIEVASHRRLFDFFSRVRSDANSLYDVEFDALLGSYCNTLSLVRFLELGLSVACVCTKFPELAYMNEGRVQFEVHQPLIARDGPHPIEQPTHNYMTKIIDRRALNAAFSLATEAIALLTGEALDGTGIGAHRQLRAIQQLARNVQAVLGAFERGTADQMLHVLLEKAPPLALLLPMQRYLDNGRLATRVARATLVAELKRSFCETSFFLGKAGHRREAVEAWLVDLTTATQPSVAVPRLTHADTRGRPVDGVLVTTAPIKQRLLQSFLKVEDTEADVPVTYGEMVLNGANLVTALVMGKAVRSLDDVGRHLLEMQEEQLDLNRQTLDELESAPQTTRVRADLVSIGEKLVFLEALEKRIYAATNVPYPLVGAMDLTFVLPLGLFNPVMERFAAHAGDLVPAPGHPDPRAFPPRQLFFWGKDRQVLRLSLEHAIGTVCHPSLMNVDAAVGGLNRDPVEAANPYGAYVAAPAGPAADMQQLFLNAWGQRLAHGRVRWVAEGQMTPEQFMQPDNANLALELHPAFDFFVGVADVELPGGDVPPAGPGEIQATWRVVNGNLPLALCPAAFRDARGLELGVGRHAMAPATIAAVRGAFDDRNYPAVFYLLQAAIHGSEHVFCALARLVVQCITSYWNNTRCAAFVNDYSLVSYVVTYLGGDLPEECMAVYRDLVAHVEALAQLVDDFTLTGPELGGQAQAELNHLMRDPALLPPLVWDCDALMRRAALDRHRDCRVSAGGHDPVYAAACNVATADFNRNDGQLLHNTQARAADAADDRPHRGADWTVHHKIYYYVMVPAFSRGRCCTAGVRFDRVYATLQNMVVPEIAPGEECPSDPVTDPAHPLHPANLVANTVNAMFHNGRVVVDGPAMLTLQVLAHNMAERTTALLCSAAPDAGANTASTTNMRIFDGALHAGILLMAPQHLDHTIQNGDYFYPLPVHALFAGADHVANAPNFPPALRDLSRQVPLVPPALGANYFSSIRQPVVQHVRESAAGENALTYALMAGYFKISPVALHHQLKTGLHPGFGFTVVRQDRFVTENVLFSERASEAYFLGQLQVARHETGGGVNFTLTQPRANVDLGVGYTAVVATATVRNPVTDMGNLPQNFYLGRGAPPLLDNAAAVYLRNAVVAGNRLGPAQPVPVFGCAQVPRRAGMDHGQDAVCEFIATPVSTDVNYFRRPCNPRGRAAGGVYAGDKEGDVTALMYDHGQSDPSRAFAATANPWASQRFSYGDLLYNGAYHLNGASPVLSPCFKFFTSADIAAKHRCLERLIVETGSAVSTATAASDVQFKRPPGCRELVEDPCGLFQEAYPLTCASDPALLRSARNGEAHARETHFAQYLVYDASPLKGLAL</sequence>
<dbReference type="EMBL" id="X14112">
    <property type="protein sequence ID" value="CAA32332.1"/>
    <property type="molecule type" value="Genomic_DNA"/>
</dbReference>
<dbReference type="EMBL" id="X04467">
    <property type="protein sequence ID" value="CAA28154.1"/>
    <property type="molecule type" value="Genomic_DNA"/>
</dbReference>
<dbReference type="PIR" id="A27239">
    <property type="entry name" value="VCBE17"/>
</dbReference>
<dbReference type="PDB" id="1NO7">
    <property type="method" value="X-ray"/>
    <property type="resolution" value="2.90 A"/>
    <property type="chains" value="A/B=451-1054"/>
</dbReference>
<dbReference type="PDBsum" id="1NO7"/>
<dbReference type="SMR" id="P06491"/>
<dbReference type="BioGRID" id="971410">
    <property type="interactions" value="4"/>
</dbReference>
<dbReference type="DIP" id="DIP-57212N"/>
<dbReference type="IntAct" id="P06491">
    <property type="interactions" value="4"/>
</dbReference>
<dbReference type="MINT" id="P06491"/>
<dbReference type="EvolutionaryTrace" id="P06491"/>
<dbReference type="Proteomes" id="UP000009294">
    <property type="component" value="Segment"/>
</dbReference>
<dbReference type="GO" id="GO:0042025">
    <property type="term" value="C:host cell nucleus"/>
    <property type="evidence" value="ECO:0007669"/>
    <property type="project" value="UniProtKB-SubCell"/>
</dbReference>
<dbReference type="GO" id="GO:0039622">
    <property type="term" value="C:T=16 icosahedral viral capsid"/>
    <property type="evidence" value="ECO:0007669"/>
    <property type="project" value="UniProtKB-KW"/>
</dbReference>
<dbReference type="GO" id="GO:0005198">
    <property type="term" value="F:structural molecule activity"/>
    <property type="evidence" value="ECO:0007669"/>
    <property type="project" value="InterPro"/>
</dbReference>
<dbReference type="HAMAP" id="MF_04016">
    <property type="entry name" value="HSV_MCP"/>
    <property type="match status" value="1"/>
</dbReference>
<dbReference type="InterPro" id="IPR000912">
    <property type="entry name" value="Herpes_MCP"/>
</dbReference>
<dbReference type="InterPro" id="IPR023233">
    <property type="entry name" value="Herpes_MCP_upper_sf"/>
</dbReference>
<dbReference type="Pfam" id="PF03122">
    <property type="entry name" value="Herpes_MCP"/>
    <property type="match status" value="1"/>
</dbReference>
<dbReference type="PRINTS" id="PR00235">
    <property type="entry name" value="HSVCAPSIDMCP"/>
</dbReference>
<dbReference type="SUPFAM" id="SSF103417">
    <property type="entry name" value="Major capsid protein VP5"/>
    <property type="match status" value="1"/>
</dbReference>
<proteinExistence type="evidence at protein level"/>
<gene>
    <name evidence="1" type="primary">MCP</name>
</gene>
<keyword id="KW-0002">3D-structure</keyword>
<keyword id="KW-0167">Capsid protein</keyword>
<keyword id="KW-0903">Direct protein sequencing</keyword>
<keyword id="KW-1048">Host nucleus</keyword>
<keyword id="KW-1185">Reference proteome</keyword>
<keyword id="KW-1147">T=16 icosahedral capsid protein</keyword>
<keyword id="KW-0946">Virion</keyword>
<comment type="function">
    <text evidence="1 5">Self-assembles to form an icosahedral capsid with a T=16 symmetry, about 200 nm in diameter, and consisting of 150 hexons and 12 pentons (total of 162 capsomers). Hexons form the edges and faces of the capsid and are each composed of six MCP molecules. In contrast, one penton is found at each of the 12 vertices. Eleven of the pentons are MCP pentamers, while the last vertex is occupied by the portal complex. The capsid is surrounded by a layer of proteinaceous material designated the tegument which, in turn, is enclosed in an envelope of host cell-derived lipids containing virus-encoded glycoproteins.</text>
</comment>
<comment type="subunit">
    <text evidence="1 2 3 6 7">Homomultimer. Makes the hexons and eleven out of twelve pentons. Interacts with triplex proteins 1/TRX1 and 2/TRX2; adjacent capsomers are linked together in groups of three by triplexes, heterotrimeric complexes composed of one molecule of TRX1 and two molecules of TRX2. Interacts with scaffold protein; this interaction allows efficient MCP transport to the host nucleus. Interacts with capsid vertex component 2/CVC2. Interacts with the small capsomere-interacting protein/SCP.</text>
</comment>
<comment type="interaction">
    <interactant intactId="EBI-7608705">
        <id>P06491</id>
    </interactant>
    <interactant intactId="EBI-8621986">
        <id>P10210</id>
        <label>UL26</label>
    </interactant>
    <organismsDiffer>false</organismsDiffer>
    <experiments>3</experiments>
</comment>
<comment type="subcellular location">
    <subcellularLocation>
        <location evidence="1 4">Virion</location>
    </subcellularLocation>
    <subcellularLocation>
        <location evidence="1 4">Host nucleus</location>
    </subcellularLocation>
</comment>
<comment type="similarity">
    <text evidence="1">Belongs to the herpesviridae major capsid protein family.</text>
</comment>
<organismHost>
    <name type="scientific">Homo sapiens</name>
    <name type="common">Human</name>
    <dbReference type="NCBI Taxonomy" id="9606"/>
</organismHost>
<feature type="chain" id="PRO_0000115702" description="Major capsid protein">
    <location>
        <begin position="1"/>
        <end position="1374"/>
    </location>
</feature>
<feature type="helix" evidence="8">
    <location>
        <begin position="487"/>
        <end position="489"/>
    </location>
</feature>
<feature type="helix" evidence="8">
    <location>
        <begin position="498"/>
        <end position="506"/>
    </location>
</feature>
<feature type="helix" evidence="8">
    <location>
        <begin position="510"/>
        <end position="514"/>
    </location>
</feature>
<feature type="strand" evidence="8">
    <location>
        <begin position="548"/>
        <end position="550"/>
    </location>
</feature>
<feature type="strand" evidence="8">
    <location>
        <begin position="572"/>
        <end position="574"/>
    </location>
</feature>
<feature type="helix" evidence="8">
    <location>
        <begin position="579"/>
        <end position="581"/>
    </location>
</feature>
<feature type="turn" evidence="8">
    <location>
        <begin position="584"/>
        <end position="586"/>
    </location>
</feature>
<feature type="helix" evidence="8">
    <location>
        <begin position="589"/>
        <end position="600"/>
    </location>
</feature>
<feature type="helix" evidence="8">
    <location>
        <begin position="608"/>
        <end position="619"/>
    </location>
</feature>
<feature type="helix" evidence="8">
    <location>
        <begin position="626"/>
        <end position="633"/>
    </location>
</feature>
<feature type="helix" evidence="8">
    <location>
        <begin position="638"/>
        <end position="643"/>
    </location>
</feature>
<feature type="helix" evidence="8">
    <location>
        <begin position="645"/>
        <end position="658"/>
    </location>
</feature>
<feature type="helix" evidence="8">
    <location>
        <begin position="668"/>
        <end position="676"/>
    </location>
</feature>
<feature type="helix" evidence="8">
    <location>
        <begin position="679"/>
        <end position="681"/>
    </location>
</feature>
<feature type="helix" evidence="8">
    <location>
        <begin position="684"/>
        <end position="706"/>
    </location>
</feature>
<feature type="helix" evidence="8">
    <location>
        <begin position="714"/>
        <end position="716"/>
    </location>
</feature>
<feature type="helix" evidence="8">
    <location>
        <begin position="719"/>
        <end position="723"/>
    </location>
</feature>
<feature type="strand" evidence="8">
    <location>
        <begin position="737"/>
        <end position="739"/>
    </location>
</feature>
<feature type="helix" evidence="8">
    <location>
        <begin position="740"/>
        <end position="746"/>
    </location>
</feature>
<feature type="turn" evidence="8">
    <location>
        <begin position="750"/>
        <end position="752"/>
    </location>
</feature>
<feature type="strand" evidence="8">
    <location>
        <begin position="764"/>
        <end position="767"/>
    </location>
</feature>
<feature type="strand" evidence="8">
    <location>
        <begin position="771"/>
        <end position="773"/>
    </location>
</feature>
<feature type="strand" evidence="8">
    <location>
        <begin position="782"/>
        <end position="784"/>
    </location>
</feature>
<feature type="strand" evidence="8">
    <location>
        <begin position="789"/>
        <end position="793"/>
    </location>
</feature>
<feature type="strand" evidence="8">
    <location>
        <begin position="796"/>
        <end position="798"/>
    </location>
</feature>
<feature type="helix" evidence="8">
    <location>
        <begin position="803"/>
        <end position="814"/>
    </location>
</feature>
<feature type="helix" evidence="8">
    <location>
        <begin position="816"/>
        <end position="821"/>
    </location>
</feature>
<feature type="strand" evidence="8">
    <location>
        <begin position="826"/>
        <end position="830"/>
    </location>
</feature>
<feature type="helix" evidence="8">
    <location>
        <begin position="832"/>
        <end position="839"/>
    </location>
</feature>
<feature type="turn" evidence="8">
    <location>
        <begin position="857"/>
        <end position="859"/>
    </location>
</feature>
<feature type="helix" evidence="8">
    <location>
        <begin position="867"/>
        <end position="869"/>
    </location>
</feature>
<feature type="helix" evidence="8">
    <location>
        <begin position="875"/>
        <end position="881"/>
    </location>
</feature>
<feature type="helix" evidence="8">
    <location>
        <begin position="888"/>
        <end position="892"/>
    </location>
</feature>
<feature type="helix" evidence="8">
    <location>
        <begin position="893"/>
        <end position="898"/>
    </location>
</feature>
<feature type="strand" evidence="8">
    <location>
        <begin position="907"/>
        <end position="912"/>
    </location>
</feature>
<feature type="strand" evidence="8">
    <location>
        <begin position="928"/>
        <end position="939"/>
    </location>
</feature>
<feature type="turn" evidence="8">
    <location>
        <begin position="948"/>
        <end position="952"/>
    </location>
</feature>
<feature type="strand" evidence="8">
    <location>
        <begin position="953"/>
        <end position="957"/>
    </location>
</feature>
<feature type="helix" evidence="8">
    <location>
        <begin position="967"/>
        <end position="971"/>
    </location>
</feature>
<feature type="turn" evidence="8">
    <location>
        <begin position="978"/>
        <end position="980"/>
    </location>
</feature>
<feature type="helix" evidence="8">
    <location>
        <begin position="981"/>
        <end position="984"/>
    </location>
</feature>
<feature type="helix" evidence="8">
    <location>
        <begin position="992"/>
        <end position="994"/>
    </location>
</feature>
<feature type="helix" evidence="8">
    <location>
        <begin position="997"/>
        <end position="999"/>
    </location>
</feature>
<feature type="strand" evidence="8">
    <location>
        <begin position="1000"/>
        <end position="1002"/>
    </location>
</feature>
<feature type="helix" evidence="8">
    <location>
        <begin position="1004"/>
        <end position="1012"/>
    </location>
</feature>
<feature type="helix" evidence="8">
    <location>
        <begin position="1017"/>
        <end position="1027"/>
    </location>
</feature>
<feature type="helix" evidence="8">
    <location>
        <begin position="1033"/>
        <end position="1042"/>
    </location>
</feature>
<organism>
    <name type="scientific">Human herpesvirus 1 (strain 17)</name>
    <name type="common">HHV-1</name>
    <name type="synonym">Human herpes simplex virus 1</name>
    <dbReference type="NCBI Taxonomy" id="10299"/>
    <lineage>
        <taxon>Viruses</taxon>
        <taxon>Duplodnaviria</taxon>
        <taxon>Heunggongvirae</taxon>
        <taxon>Peploviricota</taxon>
        <taxon>Herviviricetes</taxon>
        <taxon>Herpesvirales</taxon>
        <taxon>Orthoherpesviridae</taxon>
        <taxon>Alphaherpesvirinae</taxon>
        <taxon>Simplexvirus</taxon>
        <taxon>Simplexvirus humanalpha1</taxon>
        <taxon>Human herpesvirus 1</taxon>
    </lineage>
</organism>